<comment type="function">
    <text evidence="1">General inhibitor of pancreatic serine proteases: inhibits chymotrypsin, trypsin, elastases, factor X, kallikrein as well as a variety of other proteases.</text>
</comment>
<comment type="subunit">
    <text evidence="1">Homodimer.</text>
</comment>
<comment type="subcellular location">
    <subcellularLocation>
        <location evidence="1">Periplasm</location>
    </subcellularLocation>
</comment>
<comment type="similarity">
    <text evidence="1">Belongs to the protease inhibitor I11 (ecotin) family.</text>
</comment>
<accession>Q1CFY7</accession>
<accession>C4GWC9</accession>
<protein>
    <recommendedName>
        <fullName evidence="1">Ecotin</fullName>
    </recommendedName>
</protein>
<gene>
    <name evidence="1" type="primary">eco</name>
    <name type="ordered locus">YPN_2766</name>
    <name type="ORF">YP516_3126</name>
</gene>
<evidence type="ECO:0000255" key="1">
    <source>
        <dbReference type="HAMAP-Rule" id="MF_00706"/>
    </source>
</evidence>
<name>ECOT_YERPN</name>
<feature type="signal peptide" evidence="1">
    <location>
        <begin position="1"/>
        <end position="21"/>
    </location>
</feature>
<feature type="chain" id="PRO_5000115497" description="Ecotin">
    <location>
        <begin position="22"/>
        <end position="169"/>
    </location>
</feature>
<feature type="site" description="Reactive bond" evidence="1">
    <location>
        <begin position="110"/>
        <end position="111"/>
    </location>
</feature>
<feature type="disulfide bond" evidence="1">
    <location>
        <begin position="76"/>
        <end position="113"/>
    </location>
</feature>
<organism>
    <name type="scientific">Yersinia pestis bv. Antiqua (strain Nepal516)</name>
    <dbReference type="NCBI Taxonomy" id="377628"/>
    <lineage>
        <taxon>Bacteria</taxon>
        <taxon>Pseudomonadati</taxon>
        <taxon>Pseudomonadota</taxon>
        <taxon>Gammaproteobacteria</taxon>
        <taxon>Enterobacterales</taxon>
        <taxon>Yersiniaceae</taxon>
        <taxon>Yersinia</taxon>
    </lineage>
</organism>
<dbReference type="EMBL" id="CP000305">
    <property type="protein sequence ID" value="ABG19093.1"/>
    <property type="molecule type" value="Genomic_DNA"/>
</dbReference>
<dbReference type="EMBL" id="ACNQ01000017">
    <property type="protein sequence ID" value="EEO75229.1"/>
    <property type="molecule type" value="Genomic_DNA"/>
</dbReference>
<dbReference type="RefSeq" id="WP_002210815.1">
    <property type="nucleotide sequence ID" value="NZ_ACNQ01000017.1"/>
</dbReference>
<dbReference type="SMR" id="Q1CFY7"/>
<dbReference type="MEROPS" id="I11.001"/>
<dbReference type="GeneID" id="57977350"/>
<dbReference type="KEGG" id="ypn:YPN_2766"/>
<dbReference type="HOGENOM" id="CLU_111565_0_0_6"/>
<dbReference type="Proteomes" id="UP000008936">
    <property type="component" value="Chromosome"/>
</dbReference>
<dbReference type="GO" id="GO:0042597">
    <property type="term" value="C:periplasmic space"/>
    <property type="evidence" value="ECO:0007669"/>
    <property type="project" value="UniProtKB-SubCell"/>
</dbReference>
<dbReference type="GO" id="GO:0004867">
    <property type="term" value="F:serine-type endopeptidase inhibitor activity"/>
    <property type="evidence" value="ECO:0007669"/>
    <property type="project" value="UniProtKB-UniRule"/>
</dbReference>
<dbReference type="CDD" id="cd00242">
    <property type="entry name" value="Ecotin"/>
    <property type="match status" value="1"/>
</dbReference>
<dbReference type="Gene3D" id="2.60.40.550">
    <property type="entry name" value="Ecotin"/>
    <property type="match status" value="1"/>
</dbReference>
<dbReference type="HAMAP" id="MF_00706">
    <property type="entry name" value="Ecotin"/>
    <property type="match status" value="1"/>
</dbReference>
<dbReference type="InterPro" id="IPR036198">
    <property type="entry name" value="Ecotin_sf"/>
</dbReference>
<dbReference type="InterPro" id="IPR005658">
    <property type="entry name" value="Prot_inh_ecotin"/>
</dbReference>
<dbReference type="InterPro" id="IPR023084">
    <property type="entry name" value="Prot_inh_ecotin_gammaproteobac"/>
</dbReference>
<dbReference type="NCBIfam" id="NF002987">
    <property type="entry name" value="PRK03719.1"/>
    <property type="match status" value="1"/>
</dbReference>
<dbReference type="PANTHER" id="PTHR35890">
    <property type="match status" value="1"/>
</dbReference>
<dbReference type="PANTHER" id="PTHR35890:SF3">
    <property type="entry name" value="ECOTIN"/>
    <property type="match status" value="1"/>
</dbReference>
<dbReference type="Pfam" id="PF03974">
    <property type="entry name" value="Ecotin"/>
    <property type="match status" value="1"/>
</dbReference>
<dbReference type="PIRSF" id="PIRSF006865">
    <property type="entry name" value="Prot_inh_ecotin"/>
    <property type="match status" value="1"/>
</dbReference>
<dbReference type="SUPFAM" id="SSF49772">
    <property type="entry name" value="Ecotin, trypsin inhibitor"/>
    <property type="match status" value="1"/>
</dbReference>
<proteinExistence type="inferred from homology"/>
<sequence length="169" mass="18871">MKKCSIILASVLLATSINAIADTPTPLNQQQPLEKIAPYPQAEKGMSRQVIFLEPQKDESRFKVELLIGKTLNVDCNRHMLGGNLETRTLSGWGFDYLVMDKISQPASTMMACPEDSKPQVKFVTANLGDAAMQRYNSRLPIVVYVPQGVEVKYRIWEAGEDIRSAQVK</sequence>
<reference key="1">
    <citation type="journal article" date="2006" name="J. Bacteriol.">
        <title>Complete genome sequence of Yersinia pestis strains Antiqua and Nepal516: evidence of gene reduction in an emerging pathogen.</title>
        <authorList>
            <person name="Chain P.S.G."/>
            <person name="Hu P."/>
            <person name="Malfatti S.A."/>
            <person name="Radnedge L."/>
            <person name="Larimer F."/>
            <person name="Vergez L.M."/>
            <person name="Worsham P."/>
            <person name="Chu M.C."/>
            <person name="Andersen G.L."/>
        </authorList>
    </citation>
    <scope>NUCLEOTIDE SEQUENCE [LARGE SCALE GENOMIC DNA]</scope>
    <source>
        <strain>Nepal516</strain>
    </source>
</reference>
<reference key="2">
    <citation type="submission" date="2009-04" db="EMBL/GenBank/DDBJ databases">
        <title>Yersinia pestis Nepal516A whole genome shotgun sequencing project.</title>
        <authorList>
            <person name="Plunkett G. III"/>
            <person name="Anderson B.D."/>
            <person name="Baumler D.J."/>
            <person name="Burland V."/>
            <person name="Cabot E.L."/>
            <person name="Glasner J.D."/>
            <person name="Mau B."/>
            <person name="Neeno-Eckwall E."/>
            <person name="Perna N.T."/>
            <person name="Munk A.C."/>
            <person name="Tapia R."/>
            <person name="Green L.D."/>
            <person name="Rogers Y.C."/>
            <person name="Detter J.C."/>
            <person name="Bruce D.C."/>
            <person name="Brettin T.S."/>
        </authorList>
    </citation>
    <scope>NUCLEOTIDE SEQUENCE [LARGE SCALE GENOMIC DNA]</scope>
    <source>
        <strain>Nepal516</strain>
    </source>
</reference>
<keyword id="KW-1015">Disulfide bond</keyword>
<keyword id="KW-0574">Periplasm</keyword>
<keyword id="KW-0646">Protease inhibitor</keyword>
<keyword id="KW-0722">Serine protease inhibitor</keyword>
<keyword id="KW-0732">Signal</keyword>